<gene>
    <name evidence="4" type="primary">cap15</name>
    <name type="ORF">BSJ22_RS20900</name>
</gene>
<reference key="1">
    <citation type="journal article" date="2018" name="Genome Announc.">
        <title>Draft Genome Sequences of Escherichia albertii, Escherichia fergusonii, and Strains Belonging to Six Cryptic Lineages of Escherichia spp.</title>
        <authorList>
            <person name="Gangiredla J."/>
            <person name="Mammel M.K."/>
            <person name="Barnaba T.J."/>
            <person name="Tartera C."/>
            <person name="Gebru S.T."/>
            <person name="Patel I.R."/>
            <person name="Leonard S.R."/>
            <person name="Kotewicz M.L."/>
            <person name="Lampel K.A."/>
            <person name="Elkins C.A."/>
            <person name="Lacher D.W."/>
        </authorList>
    </citation>
    <scope>NUCLEOTIDE SEQUENCE [LARGE SCALE GENOMIC DNA]</scope>
    <source>
        <strain>MOD1-EC1698</strain>
    </source>
</reference>
<reference key="2">
    <citation type="journal article" date="2020" name="Nat. Microbiol.">
        <title>Diversity and classification of cyclic-oligonucleotide-based anti-phage signalling systems.</title>
        <authorList>
            <person name="Millman A."/>
            <person name="Melamed S."/>
            <person name="Amitai G."/>
            <person name="Sorek R."/>
        </authorList>
    </citation>
    <scope>CLASSIFICATION AND NOMENCLATURE</scope>
</reference>
<reference key="3">
    <citation type="journal article" date="2021" name="Mol. Cell">
        <title>Effector-mediated membrane disruption controls cell death in CBASS antiphage defense.</title>
        <authorList>
            <person name="Duncan-Lowey B."/>
            <person name="McNamara-Bordewick N.K."/>
            <person name="Tal N."/>
            <person name="Sorek R."/>
            <person name="Kranzusch P.J."/>
        </authorList>
    </citation>
    <scope>FUNCTION</scope>
    <scope>SUBCELLULAR LOCATION</scope>
    <scope>DOMAIN</scope>
    <source>
        <strain>MOD1-EC1698</strain>
    </source>
</reference>
<comment type="function">
    <text evidence="1 3 6">Effector protein of a CBASS antivirus system. CBASS (cyclic oligonucleotide-based antiphage signaling system) provides immunity against bacteriophages. The CD-NTase protein (CdnB) synthesizes cyclic nucleotides in response to infection; these serve as specific second messenger signals. The signals activate a diverse range of effectors, leading to bacterial cell death and thus abortive phage infection. Causes cell death in response to 3',3'-cGAMP upon coexpression in E.coli with V.cholerae DncV; inactivating DncV prevents cell death (PubMed:34784509). Upon induction in E.coli with non-cognate DncV, the cell inner membrane shrinks and separates from the cell wall with a concomitant increase in the periplasm (PubMed:34784509). Binds cyclic nucleotide second messenger 3',3'-cGAMP, probably oligomerizing, and induces cell membrane shrinkage and rupture, leading to cell death (By similarity). A type I CBASS system (Probable) (PubMed:32839535).</text>
</comment>
<comment type="function">
    <text evidence="3">Protects E.coli against phage infection. When the CBASS operon (cdnB-cap15) is introduced in E.coli MG1655 there is about 100-fold protection against phage T2 and about 10-fold protection against phage T5 and T6 (PubMed:34784509).</text>
</comment>
<comment type="subunit">
    <text evidence="1 7">The beta barrel domain oligomerizes; in the presence of cyclic nucleotides (probably 3',3'-cGAMP, but the cognate CD-NTase makes at least 4 other cyclic nucleotides) higher-level oligomers are detected.</text>
</comment>
<comment type="subcellular location">
    <subcellularLocation>
        <location evidence="3">Cell inner membrane</location>
        <topology evidence="7">Multi-pass membrane protein</topology>
    </subcellularLocation>
    <text evidence="3">In the absence of 3',3'-cGAMP forms puncta mostly found at the cell poles. In the presence of 3',3'-cGAMP redistributes as puncta over the cell inner membrane as it collapses away from the cell wall; cells die rapidly as the cell inner membrane shrinks from the cell wall (PubMed:34784509).</text>
</comment>
<comment type="domain">
    <text evidence="3 7">Cell toxicity relies on the transmembrane domain; its replacement by a SUMO domain prevents cell death in cells also expressing DncV from V.cholerae (PubMed:34784509). The C-terminus forms a minimal, eight-stranded beta barrel that probably oligomerizes (Probable) (PubMed:34784509).</text>
</comment>
<comment type="similarity">
    <text evidence="5">Belongs to the CBASS Cap15 membrane effector family.</text>
</comment>
<organism>
    <name type="scientific">Escherichia albertii</name>
    <dbReference type="NCBI Taxonomy" id="208962"/>
    <lineage>
        <taxon>Bacteria</taxon>
        <taxon>Pseudomonadati</taxon>
        <taxon>Pseudomonadota</taxon>
        <taxon>Gammaproteobacteria</taxon>
        <taxon>Enterobacterales</taxon>
        <taxon>Enterobacteriaceae</taxon>
        <taxon>Escherichia</taxon>
    </lineage>
</organism>
<accession>P0DXA2</accession>
<protein>
    <recommendedName>
        <fullName evidence="4">CD-NTase-associated protein 15</fullName>
        <shortName evidence="4">EaCap15</shortName>
    </recommendedName>
</protein>
<name>CAP15_ESCAL</name>
<sequence length="194" mass="22616">MRMWELLPSKIKYGISTIISIIVFLFFLEFLGQPVLKSVSYTITTITILAFIFGKYLWKYFYIDYLKHKFCPDFNGRWIGKIESNYSGGTKVEFPLEIKADFFSIKMKGNTTIGRTYSNYCKVVRAEDDSFELVYMFKVFNDTPSITDTSFYEGAARLRVIDIKTMNMKGVFWTNRCWENGKNTAGIIELSKEV</sequence>
<feature type="chain" id="PRO_0000459802" description="CD-NTase-associated protein 15">
    <location>
        <begin position="1"/>
        <end position="194"/>
    </location>
</feature>
<feature type="transmembrane region" description="Helical" evidence="2">
    <location>
        <begin position="15"/>
        <end position="35"/>
    </location>
</feature>
<feature type="transmembrane region" description="Helical" evidence="2">
    <location>
        <begin position="43"/>
        <end position="63"/>
    </location>
</feature>
<feature type="region of interest" description="Required for cell toxicity" evidence="3">
    <location>
        <begin position="1"/>
        <end position="73"/>
    </location>
</feature>
<dbReference type="EMBL" id="PTRT01000132">
    <property type="status" value="NOT_ANNOTATED_CDS"/>
    <property type="molecule type" value="Genomic_DNA"/>
</dbReference>
<dbReference type="RefSeq" id="WP_206748793.1">
    <property type="nucleotide sequence ID" value="NZ_PTRT01000132.1"/>
</dbReference>
<dbReference type="SMR" id="P0DXA2"/>
<dbReference type="GO" id="GO:0005886">
    <property type="term" value="C:plasma membrane"/>
    <property type="evidence" value="ECO:0007669"/>
    <property type="project" value="UniProtKB-SubCell"/>
</dbReference>
<dbReference type="GO" id="GO:0000166">
    <property type="term" value="F:nucleotide binding"/>
    <property type="evidence" value="ECO:0007669"/>
    <property type="project" value="UniProtKB-KW"/>
</dbReference>
<dbReference type="GO" id="GO:0051607">
    <property type="term" value="P:defense response to virus"/>
    <property type="evidence" value="ECO:0007669"/>
    <property type="project" value="UniProtKB-KW"/>
</dbReference>
<dbReference type="InterPro" id="IPR041208">
    <property type="entry name" value="Cap15"/>
</dbReference>
<dbReference type="Pfam" id="PF18153">
    <property type="entry name" value="Cap15_CD_rec"/>
    <property type="match status" value="1"/>
</dbReference>
<proteinExistence type="inferred from homology"/>
<keyword id="KW-0051">Antiviral defense</keyword>
<keyword id="KW-0997">Cell inner membrane</keyword>
<keyword id="KW-1003">Cell membrane</keyword>
<keyword id="KW-0472">Membrane</keyword>
<keyword id="KW-0547">Nucleotide-binding</keyword>
<keyword id="KW-0812">Transmembrane</keyword>
<keyword id="KW-1133">Transmembrane helix</keyword>
<evidence type="ECO:0000250" key="1">
    <source>
        <dbReference type="UniProtKB" id="P0DXA4"/>
    </source>
</evidence>
<evidence type="ECO:0000255" key="2"/>
<evidence type="ECO:0000269" key="3">
    <source>
    </source>
</evidence>
<evidence type="ECO:0000303" key="4">
    <source>
    </source>
</evidence>
<evidence type="ECO:0000305" key="5"/>
<evidence type="ECO:0000305" key="6">
    <source>
    </source>
</evidence>
<evidence type="ECO:0000305" key="7">
    <source>
    </source>
</evidence>